<comment type="function">
    <text>May play a role in meristem function, and may be involved in maintaining cells in an undifferentiated, meristematic state. Probably binds to the DNA sequence 5'-TGAC-3'.</text>
</comment>
<comment type="subunit">
    <text evidence="4 5 6 7">May form heterodimeric complex with the TALE/BELL protein BEL1, BLH1 and BLH2. Interacts with OFP12 and OFP14. Interacts with BZIP30 (PubMed:27402171).</text>
</comment>
<comment type="interaction">
    <interactant intactId="EBI-1153809">
        <id>P46640</id>
    </interactant>
    <interactant intactId="EBI-1153783">
        <id>Q38897</id>
        <label>BEL1</label>
    </interactant>
    <organismsDiffer>false</organismsDiffer>
    <experiments>3</experiments>
</comment>
<comment type="interaction">
    <interactant intactId="EBI-1153809">
        <id>P46640</id>
    </interactant>
    <interactant intactId="EBI-1148379">
        <id>Q9SJ56</id>
        <label>BLH1</label>
    </interactant>
    <organismsDiffer>false</organismsDiffer>
    <experiments>3</experiments>
</comment>
<comment type="interaction">
    <interactant intactId="EBI-1153809">
        <id>P46640</id>
    </interactant>
    <interactant intactId="EBI-1153895">
        <id>Q9FXG8</id>
        <label>BLH10</label>
    </interactant>
    <organismsDiffer>false</organismsDiffer>
    <experiments>4</experiments>
</comment>
<comment type="interaction">
    <interactant intactId="EBI-1153809">
        <id>P46640</id>
    </interactant>
    <interactant intactId="EBI-1153992">
        <id>Q8S897</id>
        <label>BLH5</label>
    </interactant>
    <organismsDiffer>false</organismsDiffer>
    <experiments>3</experiments>
</comment>
<comment type="interaction">
    <interactant intactId="EBI-1153809">
        <id>P46640</id>
    </interactant>
    <interactant intactId="EBI-1153881">
        <id>O65685</id>
        <label>BLH6</label>
    </interactant>
    <organismsDiffer>false</organismsDiffer>
    <experiments>3</experiments>
</comment>
<comment type="interaction">
    <interactant intactId="EBI-1153809">
        <id>P46640</id>
    </interactant>
    <interactant intactId="EBI-530473">
        <id>Q9LZM8</id>
        <label>BLH9</label>
    </interactant>
    <organismsDiffer>false</organismsDiffer>
    <experiments>4</experiments>
</comment>
<comment type="subcellular location">
    <subcellularLocation>
        <location evidence="8">Nucleus</location>
    </subcellularLocation>
</comment>
<comment type="tissue specificity">
    <text>Expressed predominantly in shoot apices of seedlings, in the receptacle and developing pistil of flowers and in axillary buds of inflorescence stems.</text>
</comment>
<comment type="similarity">
    <text evidence="2">Belongs to the TALE/KNOX homeobox family.</text>
</comment>
<comment type="sequence caution" evidence="8">
    <conflict type="erroneous gene model prediction">
        <sequence resource="EMBL-CDS" id="AAG52468"/>
    </conflict>
</comment>
<keyword id="KW-0238">DNA-binding</keyword>
<keyword id="KW-0371">Homeobox</keyword>
<keyword id="KW-0539">Nucleus</keyword>
<keyword id="KW-1185">Reference proteome</keyword>
<accession>P46640</accession>
<accession>Q42414</accession>
<accession>Q9CAL4</accession>
<organism>
    <name type="scientific">Arabidopsis thaliana</name>
    <name type="common">Mouse-ear cress</name>
    <dbReference type="NCBI Taxonomy" id="3702"/>
    <lineage>
        <taxon>Eukaryota</taxon>
        <taxon>Viridiplantae</taxon>
        <taxon>Streptophyta</taxon>
        <taxon>Embryophyta</taxon>
        <taxon>Tracheophyta</taxon>
        <taxon>Spermatophyta</taxon>
        <taxon>Magnoliopsida</taxon>
        <taxon>eudicotyledons</taxon>
        <taxon>Gunneridae</taxon>
        <taxon>Pentapetalae</taxon>
        <taxon>rosids</taxon>
        <taxon>malvids</taxon>
        <taxon>Brassicales</taxon>
        <taxon>Brassicaceae</taxon>
        <taxon>Camelineae</taxon>
        <taxon>Arabidopsis</taxon>
    </lineage>
</organism>
<reference key="1">
    <citation type="journal article" date="1994" name="Plant Cell">
        <title>A knotted1-like homeobox gene in Arabidopsis is expressed in the vegetative meristem and dramatically alters leaf morphology when overexpressed in transgenic plants.</title>
        <authorList>
            <person name="Lincoln C."/>
            <person name="Long J."/>
            <person name="Yamaguchi J."/>
            <person name="Serikawa K.A."/>
            <person name="Hake S."/>
        </authorList>
    </citation>
    <scope>NUCLEOTIDE SEQUENCE [MRNA]</scope>
    <source>
        <strain>cv. Columbia</strain>
    </source>
</reference>
<reference key="2">
    <citation type="journal article" date="1995" name="Plant Mol. Biol.">
        <title>The homeobox gene ATK1 of Arabidopsis thaliana is expressed in the shoot apex of the seedling and in flowers and inflorescence stems of mature plants.</title>
        <authorList>
            <person name="Dockx J."/>
            <person name="Quaedvlieg N."/>
            <person name="Keultjes G."/>
            <person name="Kock G."/>
            <person name="Weisbeek P.J."/>
            <person name="Smeekens S.C.M."/>
        </authorList>
    </citation>
    <scope>NUCLEOTIDE SEQUENCE [GENOMIC DNA / MRNA]</scope>
    <source>
        <strain>cv. Columbia</strain>
        <tissue>Seedling</tissue>
    </source>
</reference>
<reference key="3">
    <citation type="journal article" date="2000" name="Nature">
        <title>Sequence and analysis of chromosome 1 of the plant Arabidopsis thaliana.</title>
        <authorList>
            <person name="Theologis A."/>
            <person name="Ecker J.R."/>
            <person name="Palm C.J."/>
            <person name="Federspiel N.A."/>
            <person name="Kaul S."/>
            <person name="White O."/>
            <person name="Alonso J."/>
            <person name="Altafi H."/>
            <person name="Araujo R."/>
            <person name="Bowman C.L."/>
            <person name="Brooks S.Y."/>
            <person name="Buehler E."/>
            <person name="Chan A."/>
            <person name="Chao Q."/>
            <person name="Chen H."/>
            <person name="Cheuk R.F."/>
            <person name="Chin C.W."/>
            <person name="Chung M.K."/>
            <person name="Conn L."/>
            <person name="Conway A.B."/>
            <person name="Conway A.R."/>
            <person name="Creasy T.H."/>
            <person name="Dewar K."/>
            <person name="Dunn P."/>
            <person name="Etgu P."/>
            <person name="Feldblyum T.V."/>
            <person name="Feng J.-D."/>
            <person name="Fong B."/>
            <person name="Fujii C.Y."/>
            <person name="Gill J.E."/>
            <person name="Goldsmith A.D."/>
            <person name="Haas B."/>
            <person name="Hansen N.F."/>
            <person name="Hughes B."/>
            <person name="Huizar L."/>
            <person name="Hunter J.L."/>
            <person name="Jenkins J."/>
            <person name="Johnson-Hopson C."/>
            <person name="Khan S."/>
            <person name="Khaykin E."/>
            <person name="Kim C.J."/>
            <person name="Koo H.L."/>
            <person name="Kremenetskaia I."/>
            <person name="Kurtz D.B."/>
            <person name="Kwan A."/>
            <person name="Lam B."/>
            <person name="Langin-Hooper S."/>
            <person name="Lee A."/>
            <person name="Lee J.M."/>
            <person name="Lenz C.A."/>
            <person name="Li J.H."/>
            <person name="Li Y.-P."/>
            <person name="Lin X."/>
            <person name="Liu S.X."/>
            <person name="Liu Z.A."/>
            <person name="Luros J.S."/>
            <person name="Maiti R."/>
            <person name="Marziali A."/>
            <person name="Militscher J."/>
            <person name="Miranda M."/>
            <person name="Nguyen M."/>
            <person name="Nierman W.C."/>
            <person name="Osborne B.I."/>
            <person name="Pai G."/>
            <person name="Peterson J."/>
            <person name="Pham P.K."/>
            <person name="Rizzo M."/>
            <person name="Rooney T."/>
            <person name="Rowley D."/>
            <person name="Sakano H."/>
            <person name="Salzberg S.L."/>
            <person name="Schwartz J.R."/>
            <person name="Shinn P."/>
            <person name="Southwick A.M."/>
            <person name="Sun H."/>
            <person name="Tallon L.J."/>
            <person name="Tambunga G."/>
            <person name="Toriumi M.J."/>
            <person name="Town C.D."/>
            <person name="Utterback T."/>
            <person name="Van Aken S."/>
            <person name="Vaysberg M."/>
            <person name="Vysotskaia V.S."/>
            <person name="Walker M."/>
            <person name="Wu D."/>
            <person name="Yu G."/>
            <person name="Fraser C.M."/>
            <person name="Venter J.C."/>
            <person name="Davis R.W."/>
        </authorList>
    </citation>
    <scope>NUCLEOTIDE SEQUENCE [LARGE SCALE GENOMIC DNA]</scope>
    <source>
        <strain>cv. Columbia</strain>
    </source>
</reference>
<reference key="4">
    <citation type="journal article" date="2017" name="Plant J.">
        <title>Araport11: a complete reannotation of the Arabidopsis thaliana reference genome.</title>
        <authorList>
            <person name="Cheng C.Y."/>
            <person name="Krishnakumar V."/>
            <person name="Chan A.P."/>
            <person name="Thibaud-Nissen F."/>
            <person name="Schobel S."/>
            <person name="Town C.D."/>
        </authorList>
    </citation>
    <scope>GENOME REANNOTATION</scope>
    <source>
        <strain>cv. Columbia</strain>
    </source>
</reference>
<reference key="5">
    <citation type="journal article" date="2001" name="Plant Cell">
        <title>The Arabidopsis BELL1 and KNOX TALE homeodomain proteins interact through a domain conserved between plants and animals.</title>
        <authorList>
            <person name="Bellaoui M."/>
            <person name="Pidkowich M.S."/>
            <person name="Samach A."/>
            <person name="Kushalappa K."/>
            <person name="Kohalmi S.E."/>
            <person name="Modrusan Z."/>
            <person name="Crosby W.L."/>
            <person name="Haughn G.W."/>
        </authorList>
    </citation>
    <scope>INTERACTION WITH BEL1</scope>
</reference>
<reference key="6">
    <citation type="journal article" date="2005" name="Proc. Natl. Acad. Sci. U.S.A.">
        <title>A central role of Arabidopsis thaliana ovate family proteins in networking and subcellular localization of 3-aa loop extension homeodomain proteins.</title>
        <authorList>
            <person name="Hackbusch J."/>
            <person name="Richter K."/>
            <person name="Muller J."/>
            <person name="Salamini F."/>
            <person name="Uhrig J.F."/>
        </authorList>
    </citation>
    <scope>INTERACTION WITH OFP12 AND OFP14</scope>
</reference>
<reference key="7">
    <citation type="journal article" date="2007" name="Plant Cell">
        <title>The Arabidopsis BEL1-LIKE HOMEODOMAIN proteins SAW1 and SAW2 act redundantly to regulate KNOX expression spatially in leaf margins.</title>
        <authorList>
            <person name="Kumar R."/>
            <person name="Kushalappa K."/>
            <person name="Godt D."/>
            <person name="Pidkowich M.S."/>
            <person name="Pastorelli S."/>
            <person name="Hepworth S.R."/>
            <person name="Haughn G.W."/>
        </authorList>
    </citation>
    <scope>INTERACTION WITH BEL1; BLH1 AND BLH2</scope>
</reference>
<reference key="8">
    <citation type="journal article" date="2016" name="Plant J.">
        <title>Altered expression of the bZIP transcription factor DRINK ME affects growth and reproductive development in Arabidopsis thaliana.</title>
        <authorList>
            <person name="Lozano-Sotomayor P."/>
            <person name="Chavez Montes R.A."/>
            <person name="Silvestre-Vano M."/>
            <person name="Herrera-Ubaldo H."/>
            <person name="Greco R."/>
            <person name="Pablo-Villa J."/>
            <person name="Galliani B.M."/>
            <person name="Diaz-Ramirez D."/>
            <person name="Weemen M."/>
            <person name="Boutilier K."/>
            <person name="Pereira A."/>
            <person name="Colombo L."/>
            <person name="Madueno F."/>
            <person name="Marsch-Martinez N."/>
            <person name="de Folter S."/>
        </authorList>
    </citation>
    <scope>INTERACTION WITH BZIP30</scope>
</reference>
<feature type="chain" id="PRO_0000048958" description="Homeobox protein knotted-1-like 2">
    <location>
        <begin position="1"/>
        <end position="310"/>
    </location>
</feature>
<feature type="domain" description="ELK" evidence="2">
    <location>
        <begin position="208"/>
        <end position="228"/>
    </location>
</feature>
<feature type="DNA-binding region" description="Homeobox; TALE-type" evidence="1">
    <location>
        <begin position="229"/>
        <end position="292"/>
    </location>
</feature>
<feature type="region of interest" description="Disordered" evidence="3">
    <location>
        <begin position="178"/>
        <end position="208"/>
    </location>
</feature>
<feature type="compositionally biased region" description="Acidic residues" evidence="3">
    <location>
        <begin position="185"/>
        <end position="197"/>
    </location>
</feature>
<feature type="sequence conflict" description="In Ref. 2; CAA57121/CAA57122." evidence="8" ref="2">
    <original>S</original>
    <variation>A</variation>
    <location>
        <position position="265"/>
    </location>
</feature>
<feature type="sequence conflict" description="In Ref. 2; CAA57121/CAA57122." evidence="8" ref="2">
    <original>E</original>
    <variation>EE</variation>
    <location>
        <position position="310"/>
    </location>
</feature>
<protein>
    <recommendedName>
        <fullName>Homeobox protein knotted-1-like 2</fullName>
    </recommendedName>
    <alternativeName>
        <fullName>Protein ATK1</fullName>
    </alternativeName>
    <alternativeName>
        <fullName>Protein KNAT2</fullName>
    </alternativeName>
</protein>
<dbReference type="EMBL" id="U14175">
    <property type="protein sequence ID" value="AAA67882.1"/>
    <property type="molecule type" value="mRNA"/>
</dbReference>
<dbReference type="EMBL" id="X81353">
    <property type="protein sequence ID" value="CAA57121.1"/>
    <property type="molecule type" value="mRNA"/>
</dbReference>
<dbReference type="EMBL" id="X81354">
    <property type="protein sequence ID" value="CAA57122.1"/>
    <property type="molecule type" value="Genomic_DNA"/>
</dbReference>
<dbReference type="EMBL" id="AC010796">
    <property type="protein sequence ID" value="AAG52468.1"/>
    <property type="status" value="ALT_SEQ"/>
    <property type="molecule type" value="Genomic_DNA"/>
</dbReference>
<dbReference type="EMBL" id="CP002684">
    <property type="protein sequence ID" value="AEE35073.1"/>
    <property type="molecule type" value="Genomic_DNA"/>
</dbReference>
<dbReference type="PIR" id="S57818">
    <property type="entry name" value="S57818"/>
</dbReference>
<dbReference type="RefSeq" id="NP_177208.2">
    <property type="nucleotide sequence ID" value="NM_105719.5"/>
</dbReference>
<dbReference type="SMR" id="P46640"/>
<dbReference type="BioGRID" id="28608">
    <property type="interactions" value="15"/>
</dbReference>
<dbReference type="FunCoup" id="P46640">
    <property type="interactions" value="214"/>
</dbReference>
<dbReference type="IntAct" id="P46640">
    <property type="interactions" value="19"/>
</dbReference>
<dbReference type="STRING" id="3702.P46640"/>
<dbReference type="GlyGen" id="P46640">
    <property type="glycosylation" value="1 site"/>
</dbReference>
<dbReference type="iPTMnet" id="P46640"/>
<dbReference type="PaxDb" id="3702-AT1G70510.1"/>
<dbReference type="ProteomicsDB" id="238223"/>
<dbReference type="EnsemblPlants" id="AT1G70510.1">
    <property type="protein sequence ID" value="AT1G70510.1"/>
    <property type="gene ID" value="AT1G70510"/>
</dbReference>
<dbReference type="GeneID" id="843388"/>
<dbReference type="Gramene" id="AT1G70510.1">
    <property type="protein sequence ID" value="AT1G70510.1"/>
    <property type="gene ID" value="AT1G70510"/>
</dbReference>
<dbReference type="KEGG" id="ath:AT1G70510"/>
<dbReference type="Araport" id="AT1G70510"/>
<dbReference type="TAIR" id="AT1G70510">
    <property type="gene designation" value="KNAT2"/>
</dbReference>
<dbReference type="eggNOG" id="KOG0773">
    <property type="taxonomic scope" value="Eukaryota"/>
</dbReference>
<dbReference type="HOGENOM" id="CLU_040111_0_1_1"/>
<dbReference type="InParanoid" id="P46640"/>
<dbReference type="PhylomeDB" id="P46640"/>
<dbReference type="PRO" id="PR:P46640"/>
<dbReference type="Proteomes" id="UP000006548">
    <property type="component" value="Chromosome 1"/>
</dbReference>
<dbReference type="ExpressionAtlas" id="P46640">
    <property type="expression patterns" value="baseline and differential"/>
</dbReference>
<dbReference type="GO" id="GO:0005634">
    <property type="term" value="C:nucleus"/>
    <property type="evidence" value="ECO:0007005"/>
    <property type="project" value="TAIR"/>
</dbReference>
<dbReference type="GO" id="GO:0003677">
    <property type="term" value="F:DNA binding"/>
    <property type="evidence" value="ECO:0007669"/>
    <property type="project" value="UniProtKB-KW"/>
</dbReference>
<dbReference type="GO" id="GO:0003700">
    <property type="term" value="F:DNA-binding transcription factor activity"/>
    <property type="evidence" value="ECO:0000250"/>
    <property type="project" value="TAIR"/>
</dbReference>
<dbReference type="GO" id="GO:0000981">
    <property type="term" value="F:DNA-binding transcription factor activity, RNA polymerase II-specific"/>
    <property type="evidence" value="ECO:0007669"/>
    <property type="project" value="InterPro"/>
</dbReference>
<dbReference type="GO" id="GO:0009736">
    <property type="term" value="P:cytokinin-activated signaling pathway"/>
    <property type="evidence" value="ECO:0000315"/>
    <property type="project" value="TAIR"/>
</dbReference>
<dbReference type="GO" id="GO:0010094">
    <property type="term" value="P:specification of carpel identity"/>
    <property type="evidence" value="ECO:0000315"/>
    <property type="project" value="TAIR"/>
</dbReference>
<dbReference type="CDD" id="cd00086">
    <property type="entry name" value="homeodomain"/>
    <property type="match status" value="1"/>
</dbReference>
<dbReference type="Gene3D" id="1.10.10.60">
    <property type="entry name" value="Homeodomain-like"/>
    <property type="match status" value="1"/>
</dbReference>
<dbReference type="InterPro" id="IPR005539">
    <property type="entry name" value="ELK_dom"/>
</dbReference>
<dbReference type="InterPro" id="IPR001356">
    <property type="entry name" value="HD"/>
</dbReference>
<dbReference type="InterPro" id="IPR017970">
    <property type="entry name" value="Homeobox_CS"/>
</dbReference>
<dbReference type="InterPro" id="IPR009057">
    <property type="entry name" value="Homeodomain-like_sf"/>
</dbReference>
<dbReference type="InterPro" id="IPR008422">
    <property type="entry name" value="KN_HD"/>
</dbReference>
<dbReference type="InterPro" id="IPR005540">
    <property type="entry name" value="KNOX1"/>
</dbReference>
<dbReference type="InterPro" id="IPR005541">
    <property type="entry name" value="KNOX2"/>
</dbReference>
<dbReference type="InterPro" id="IPR050224">
    <property type="entry name" value="TALE_homeobox"/>
</dbReference>
<dbReference type="PANTHER" id="PTHR11850">
    <property type="entry name" value="HOMEOBOX PROTEIN TRANSCRIPTION FACTORS"/>
    <property type="match status" value="1"/>
</dbReference>
<dbReference type="Pfam" id="PF03789">
    <property type="entry name" value="ELK"/>
    <property type="match status" value="1"/>
</dbReference>
<dbReference type="Pfam" id="PF05920">
    <property type="entry name" value="Homeobox_KN"/>
    <property type="match status" value="1"/>
</dbReference>
<dbReference type="Pfam" id="PF03790">
    <property type="entry name" value="KNOX1"/>
    <property type="match status" value="1"/>
</dbReference>
<dbReference type="Pfam" id="PF03791">
    <property type="entry name" value="KNOX2"/>
    <property type="match status" value="1"/>
</dbReference>
<dbReference type="SMART" id="SM01188">
    <property type="entry name" value="ELK"/>
    <property type="match status" value="1"/>
</dbReference>
<dbReference type="SMART" id="SM00389">
    <property type="entry name" value="HOX"/>
    <property type="match status" value="1"/>
</dbReference>
<dbReference type="SMART" id="SM01255">
    <property type="entry name" value="KNOX1"/>
    <property type="match status" value="1"/>
</dbReference>
<dbReference type="SMART" id="SM01256">
    <property type="entry name" value="KNOX2"/>
    <property type="match status" value="1"/>
</dbReference>
<dbReference type="SUPFAM" id="SSF46689">
    <property type="entry name" value="Homeodomain-like"/>
    <property type="match status" value="1"/>
</dbReference>
<dbReference type="PROSITE" id="PS51213">
    <property type="entry name" value="ELK"/>
    <property type="match status" value="1"/>
</dbReference>
<dbReference type="PROSITE" id="PS00027">
    <property type="entry name" value="HOMEOBOX_1"/>
    <property type="match status" value="1"/>
</dbReference>
<dbReference type="PROSITE" id="PS50071">
    <property type="entry name" value="HOMEOBOX_2"/>
    <property type="match status" value="1"/>
</dbReference>
<name>KNAT2_ARATH</name>
<evidence type="ECO:0000255" key="1">
    <source>
        <dbReference type="PROSITE-ProRule" id="PRU00108"/>
    </source>
</evidence>
<evidence type="ECO:0000255" key="2">
    <source>
        <dbReference type="PROSITE-ProRule" id="PRU00559"/>
    </source>
</evidence>
<evidence type="ECO:0000256" key="3">
    <source>
        <dbReference type="SAM" id="MobiDB-lite"/>
    </source>
</evidence>
<evidence type="ECO:0000269" key="4">
    <source>
    </source>
</evidence>
<evidence type="ECO:0000269" key="5">
    <source>
    </source>
</evidence>
<evidence type="ECO:0000269" key="6">
    <source>
    </source>
</evidence>
<evidence type="ECO:0000269" key="7">
    <source>
    </source>
</evidence>
<evidence type="ECO:0000305" key="8"/>
<sequence length="310" mass="35638">MDRMCGFRSTEDYSEKATLMMPSDYQSLICSTTGDNQRLFGSDELATALSSELLPRIRKAEDNFSLSVIKSKIASHPLYPRLLQTYIDCQKVGAPMEIACILEEIQRENHVYKRDVAPLSCFGADPELDEFMETYCDILVKYKTDLARPFDEATTFINKIEMQLQNLCTGPASATALSDDGAVSSDEELREDDDIAADDSQQRSNDRDLKDQLLRKFGSHISSLKLEFSKKKKKGKLPREARQALLDWWNVHNKWPYPTEGDKISLAEETGLDQKQINNWFINQRKRHWKPSENMPFDMMDDSNETFFTE</sequence>
<proteinExistence type="evidence at protein level"/>
<gene>
    <name type="primary">KNAT2</name>
    <name type="synonym">ATK1</name>
    <name type="ordered locus">At1g70510</name>
    <name type="ORF">F24J13.8</name>
</gene>